<organism>
    <name type="scientific">Clostridium tetani (strain Massachusetts / E88)</name>
    <dbReference type="NCBI Taxonomy" id="212717"/>
    <lineage>
        <taxon>Bacteria</taxon>
        <taxon>Bacillati</taxon>
        <taxon>Bacillota</taxon>
        <taxon>Clostridia</taxon>
        <taxon>Eubacteriales</taxon>
        <taxon>Clostridiaceae</taxon>
        <taxon>Clostridium</taxon>
    </lineage>
</organism>
<feature type="chain" id="PRO_0000176263" description="Elongation factor 4">
    <location>
        <begin position="1"/>
        <end position="602"/>
    </location>
</feature>
<feature type="domain" description="tr-type G">
    <location>
        <begin position="7"/>
        <end position="189"/>
    </location>
</feature>
<feature type="binding site" evidence="1">
    <location>
        <begin position="19"/>
        <end position="24"/>
    </location>
    <ligand>
        <name>GTP</name>
        <dbReference type="ChEBI" id="CHEBI:37565"/>
    </ligand>
</feature>
<feature type="binding site" evidence="1">
    <location>
        <begin position="136"/>
        <end position="139"/>
    </location>
    <ligand>
        <name>GTP</name>
        <dbReference type="ChEBI" id="CHEBI:37565"/>
    </ligand>
</feature>
<gene>
    <name evidence="1" type="primary">lepA</name>
    <name type="ordered locus">CTC_02035</name>
</gene>
<comment type="function">
    <text evidence="1">Required for accurate and efficient protein synthesis under certain stress conditions. May act as a fidelity factor of the translation reaction, by catalyzing a one-codon backward translocation of tRNAs on improperly translocated ribosomes. Back-translocation proceeds from a post-translocation (POST) complex to a pre-translocation (PRE) complex, thus giving elongation factor G a second chance to translocate the tRNAs correctly. Binds to ribosomes in a GTP-dependent manner.</text>
</comment>
<comment type="catalytic activity">
    <reaction evidence="1">
        <text>GTP + H2O = GDP + phosphate + H(+)</text>
        <dbReference type="Rhea" id="RHEA:19669"/>
        <dbReference type="ChEBI" id="CHEBI:15377"/>
        <dbReference type="ChEBI" id="CHEBI:15378"/>
        <dbReference type="ChEBI" id="CHEBI:37565"/>
        <dbReference type="ChEBI" id="CHEBI:43474"/>
        <dbReference type="ChEBI" id="CHEBI:58189"/>
        <dbReference type="EC" id="3.6.5.n1"/>
    </reaction>
</comment>
<comment type="subcellular location">
    <subcellularLocation>
        <location evidence="1">Cell membrane</location>
        <topology evidence="1">Peripheral membrane protein</topology>
        <orientation evidence="1">Cytoplasmic side</orientation>
    </subcellularLocation>
</comment>
<comment type="similarity">
    <text evidence="1">Belongs to the TRAFAC class translation factor GTPase superfamily. Classic translation factor GTPase family. LepA subfamily.</text>
</comment>
<comment type="sequence caution" evidence="2">
    <conflict type="erroneous initiation">
        <sequence resource="EMBL-CDS" id="AAO36538"/>
    </conflict>
</comment>
<evidence type="ECO:0000255" key="1">
    <source>
        <dbReference type="HAMAP-Rule" id="MF_00071"/>
    </source>
</evidence>
<evidence type="ECO:0000305" key="2"/>
<dbReference type="EC" id="3.6.5.n1" evidence="1"/>
<dbReference type="EMBL" id="AE015927">
    <property type="protein sequence ID" value="AAO36538.1"/>
    <property type="status" value="ALT_INIT"/>
    <property type="molecule type" value="Genomic_DNA"/>
</dbReference>
<dbReference type="RefSeq" id="WP_035109129.1">
    <property type="nucleotide sequence ID" value="NC_004557.1"/>
</dbReference>
<dbReference type="SMR" id="Q892Q6"/>
<dbReference type="STRING" id="212717.CTC_02035"/>
<dbReference type="GeneID" id="24252569"/>
<dbReference type="KEGG" id="ctc:CTC_02035"/>
<dbReference type="HOGENOM" id="CLU_009995_3_3_9"/>
<dbReference type="OrthoDB" id="9804431at2"/>
<dbReference type="Proteomes" id="UP000001412">
    <property type="component" value="Chromosome"/>
</dbReference>
<dbReference type="GO" id="GO:0005886">
    <property type="term" value="C:plasma membrane"/>
    <property type="evidence" value="ECO:0007669"/>
    <property type="project" value="UniProtKB-SubCell"/>
</dbReference>
<dbReference type="GO" id="GO:0005525">
    <property type="term" value="F:GTP binding"/>
    <property type="evidence" value="ECO:0007669"/>
    <property type="project" value="UniProtKB-UniRule"/>
</dbReference>
<dbReference type="GO" id="GO:0003924">
    <property type="term" value="F:GTPase activity"/>
    <property type="evidence" value="ECO:0007669"/>
    <property type="project" value="UniProtKB-UniRule"/>
</dbReference>
<dbReference type="GO" id="GO:0043022">
    <property type="term" value="F:ribosome binding"/>
    <property type="evidence" value="ECO:0007669"/>
    <property type="project" value="UniProtKB-UniRule"/>
</dbReference>
<dbReference type="GO" id="GO:0003746">
    <property type="term" value="F:translation elongation factor activity"/>
    <property type="evidence" value="ECO:0007669"/>
    <property type="project" value="UniProtKB-UniRule"/>
</dbReference>
<dbReference type="GO" id="GO:0045727">
    <property type="term" value="P:positive regulation of translation"/>
    <property type="evidence" value="ECO:0007669"/>
    <property type="project" value="UniProtKB-UniRule"/>
</dbReference>
<dbReference type="CDD" id="cd03699">
    <property type="entry name" value="EF4_II"/>
    <property type="match status" value="1"/>
</dbReference>
<dbReference type="CDD" id="cd16260">
    <property type="entry name" value="EF4_III"/>
    <property type="match status" value="1"/>
</dbReference>
<dbReference type="CDD" id="cd01890">
    <property type="entry name" value="LepA"/>
    <property type="match status" value="1"/>
</dbReference>
<dbReference type="CDD" id="cd03709">
    <property type="entry name" value="lepA_C"/>
    <property type="match status" value="1"/>
</dbReference>
<dbReference type="FunFam" id="3.40.50.300:FF:000078">
    <property type="entry name" value="Elongation factor 4"/>
    <property type="match status" value="1"/>
</dbReference>
<dbReference type="FunFam" id="2.40.30.10:FF:000015">
    <property type="entry name" value="Translation factor GUF1, mitochondrial"/>
    <property type="match status" value="1"/>
</dbReference>
<dbReference type="FunFam" id="3.30.70.240:FF:000007">
    <property type="entry name" value="Translation factor GUF1, mitochondrial"/>
    <property type="match status" value="1"/>
</dbReference>
<dbReference type="FunFam" id="3.30.70.2570:FF:000001">
    <property type="entry name" value="Translation factor GUF1, mitochondrial"/>
    <property type="match status" value="1"/>
</dbReference>
<dbReference type="FunFam" id="3.30.70.870:FF:000004">
    <property type="entry name" value="Translation factor GUF1, mitochondrial"/>
    <property type="match status" value="1"/>
</dbReference>
<dbReference type="Gene3D" id="3.30.70.240">
    <property type="match status" value="1"/>
</dbReference>
<dbReference type="Gene3D" id="3.30.70.2570">
    <property type="entry name" value="Elongation factor 4, C-terminal domain"/>
    <property type="match status" value="1"/>
</dbReference>
<dbReference type="Gene3D" id="3.30.70.870">
    <property type="entry name" value="Elongation Factor G (Translational Gtpase), domain 3"/>
    <property type="match status" value="1"/>
</dbReference>
<dbReference type="Gene3D" id="3.40.50.300">
    <property type="entry name" value="P-loop containing nucleotide triphosphate hydrolases"/>
    <property type="match status" value="1"/>
</dbReference>
<dbReference type="Gene3D" id="2.40.30.10">
    <property type="entry name" value="Translation factors"/>
    <property type="match status" value="1"/>
</dbReference>
<dbReference type="HAMAP" id="MF_00071">
    <property type="entry name" value="LepA"/>
    <property type="match status" value="1"/>
</dbReference>
<dbReference type="InterPro" id="IPR006297">
    <property type="entry name" value="EF-4"/>
</dbReference>
<dbReference type="InterPro" id="IPR035647">
    <property type="entry name" value="EFG_III/V"/>
</dbReference>
<dbReference type="InterPro" id="IPR000640">
    <property type="entry name" value="EFG_V-like"/>
</dbReference>
<dbReference type="InterPro" id="IPR004161">
    <property type="entry name" value="EFTu-like_2"/>
</dbReference>
<dbReference type="InterPro" id="IPR031157">
    <property type="entry name" value="G_TR_CS"/>
</dbReference>
<dbReference type="InterPro" id="IPR038363">
    <property type="entry name" value="LepA_C_sf"/>
</dbReference>
<dbReference type="InterPro" id="IPR013842">
    <property type="entry name" value="LepA_CTD"/>
</dbReference>
<dbReference type="InterPro" id="IPR035654">
    <property type="entry name" value="LepA_IV"/>
</dbReference>
<dbReference type="InterPro" id="IPR027417">
    <property type="entry name" value="P-loop_NTPase"/>
</dbReference>
<dbReference type="InterPro" id="IPR005225">
    <property type="entry name" value="Small_GTP-bd"/>
</dbReference>
<dbReference type="InterPro" id="IPR000795">
    <property type="entry name" value="T_Tr_GTP-bd_dom"/>
</dbReference>
<dbReference type="InterPro" id="IPR009000">
    <property type="entry name" value="Transl_B-barrel_sf"/>
</dbReference>
<dbReference type="NCBIfam" id="TIGR01393">
    <property type="entry name" value="lepA"/>
    <property type="match status" value="1"/>
</dbReference>
<dbReference type="NCBIfam" id="TIGR00231">
    <property type="entry name" value="small_GTP"/>
    <property type="match status" value="1"/>
</dbReference>
<dbReference type="PANTHER" id="PTHR43512:SF4">
    <property type="entry name" value="TRANSLATION FACTOR GUF1 HOMOLOG, CHLOROPLASTIC"/>
    <property type="match status" value="1"/>
</dbReference>
<dbReference type="PANTHER" id="PTHR43512">
    <property type="entry name" value="TRANSLATION FACTOR GUF1-RELATED"/>
    <property type="match status" value="1"/>
</dbReference>
<dbReference type="Pfam" id="PF00679">
    <property type="entry name" value="EFG_C"/>
    <property type="match status" value="1"/>
</dbReference>
<dbReference type="Pfam" id="PF00009">
    <property type="entry name" value="GTP_EFTU"/>
    <property type="match status" value="1"/>
</dbReference>
<dbReference type="Pfam" id="PF03144">
    <property type="entry name" value="GTP_EFTU_D2"/>
    <property type="match status" value="1"/>
</dbReference>
<dbReference type="Pfam" id="PF06421">
    <property type="entry name" value="LepA_C"/>
    <property type="match status" value="1"/>
</dbReference>
<dbReference type="PRINTS" id="PR00315">
    <property type="entry name" value="ELONGATNFCT"/>
</dbReference>
<dbReference type="SMART" id="SM00838">
    <property type="entry name" value="EFG_C"/>
    <property type="match status" value="1"/>
</dbReference>
<dbReference type="SUPFAM" id="SSF54980">
    <property type="entry name" value="EF-G C-terminal domain-like"/>
    <property type="match status" value="2"/>
</dbReference>
<dbReference type="SUPFAM" id="SSF52540">
    <property type="entry name" value="P-loop containing nucleoside triphosphate hydrolases"/>
    <property type="match status" value="1"/>
</dbReference>
<dbReference type="SUPFAM" id="SSF50447">
    <property type="entry name" value="Translation proteins"/>
    <property type="match status" value="1"/>
</dbReference>
<dbReference type="PROSITE" id="PS00301">
    <property type="entry name" value="G_TR_1"/>
    <property type="match status" value="1"/>
</dbReference>
<dbReference type="PROSITE" id="PS51722">
    <property type="entry name" value="G_TR_2"/>
    <property type="match status" value="1"/>
</dbReference>
<accession>Q892Q6</accession>
<proteinExistence type="inferred from homology"/>
<keyword id="KW-1003">Cell membrane</keyword>
<keyword id="KW-0342">GTP-binding</keyword>
<keyword id="KW-0378">Hydrolase</keyword>
<keyword id="KW-0472">Membrane</keyword>
<keyword id="KW-0547">Nucleotide-binding</keyword>
<keyword id="KW-0648">Protein biosynthesis</keyword>
<keyword id="KW-1185">Reference proteome</keyword>
<name>LEPA_CLOTE</name>
<reference key="1">
    <citation type="journal article" date="2003" name="Proc. Natl. Acad. Sci. U.S.A.">
        <title>The genome sequence of Clostridium tetani, the causative agent of tetanus disease.</title>
        <authorList>
            <person name="Brueggemann H."/>
            <person name="Baeumer S."/>
            <person name="Fricke W.F."/>
            <person name="Wiezer A."/>
            <person name="Liesegang H."/>
            <person name="Decker I."/>
            <person name="Herzberg C."/>
            <person name="Martinez-Arias R."/>
            <person name="Merkl R."/>
            <person name="Henne A."/>
            <person name="Gottschalk G."/>
        </authorList>
    </citation>
    <scope>NUCLEOTIDE SEQUENCE [LARGE SCALE GENOMIC DNA]</scope>
    <source>
        <strain>Massachusetts / E88</strain>
    </source>
</reference>
<protein>
    <recommendedName>
        <fullName evidence="1">Elongation factor 4</fullName>
        <shortName evidence="1">EF-4</shortName>
        <ecNumber evidence="1">3.6.5.n1</ecNumber>
    </recommendedName>
    <alternativeName>
        <fullName evidence="1">Ribosomal back-translocase LepA</fullName>
    </alternativeName>
</protein>
<sequence length="602" mass="67730">MTSERQKRVRNFSIIAHIDHGKSTLADRLLEETGTLTQREMDEQTLDTMDLEKERGITIKSQAARLIYKRDDEKEYILNLIDTPGHVDFNYEVSRSLAACEGAILVVDATQGIQAQTLANCYLALEHNLEIVPVINKIDLPSARPEEVKREIEDIIGIDASDAPLISAKTGLNIKDVLEAVVEKVPYPKGEEEEPLKALIFDSYYDAYKGVVCYVRVKEGTIKPGTEIKLMATGRKYEVTETGVFVPEYMKIDGLEAGDVGYITASIKNVRDARVGDTITEAKRPATEALEGYRPAIPMVFSGIYPVDGAKYGELKEALEKLQINDAALSFEPETSIALGFGFRCGFLGLLHMDIIQERIEREFNLDIITTAPSVIYKVTKTNKETIDVTNPTNLPEESEIAYMEEPIVECSIITPSDYVGPIMELCQNRRGVFKDMQYIETTRVVLNYDIPLNEIIYDFFDALKSRSRGYASLDYELKGYTQSKLVKLDILLNGDNVDALSMIVPEERAYSRGRQMAEKLKEIIPRQMFEVPIQAAVGSKVIARETVRALRKDVLAKCYGGDISRKKKLLEKQKEGKKRMRQIGSVEIPQEAFMSVLKTEE</sequence>